<keyword id="KW-0324">Glycolysis</keyword>
<keyword id="KW-0413">Isomerase</keyword>
<keyword id="KW-0464">Manganese</keyword>
<keyword id="KW-0479">Metal-binding</keyword>
<comment type="function">
    <text evidence="1">Catalyzes the interconversion of 2-phosphoglycerate and 3-phosphoglycerate.</text>
</comment>
<comment type="catalytic activity">
    <reaction evidence="1">
        <text>(2R)-2-phosphoglycerate = (2R)-3-phosphoglycerate</text>
        <dbReference type="Rhea" id="RHEA:15901"/>
        <dbReference type="ChEBI" id="CHEBI:58272"/>
        <dbReference type="ChEBI" id="CHEBI:58289"/>
        <dbReference type="EC" id="5.4.2.12"/>
    </reaction>
</comment>
<comment type="cofactor">
    <cofactor evidence="1">
        <name>Mn(2+)</name>
        <dbReference type="ChEBI" id="CHEBI:29035"/>
    </cofactor>
    <text evidence="1">Binds 2 manganese ions per subunit.</text>
</comment>
<comment type="pathway">
    <text evidence="1">Carbohydrate degradation; glycolysis; pyruvate from D-glyceraldehyde 3-phosphate: step 3/5.</text>
</comment>
<comment type="subunit">
    <text evidence="1">Monomer.</text>
</comment>
<comment type="similarity">
    <text evidence="1">Belongs to the BPG-independent phosphoglycerate mutase family.</text>
</comment>
<sequence length="505" mass="56454">MAKKPTALIILDGFANRESEHGNAVKLANKPNFDRYYNKYPTTQIEASGLDVGLPEGQMGNSEVGHMNIGAGRIVYQSLTRINKSIEDGDFFENDVLNNAIAHVNSHDSALHIFGLLSDGGVHSHYKHLFALLELAKKQGVEKVYVHAFLDGRDVDQKSALKYIEETEAKFNELGIGQFASVSGRYYAMDRDKRWEREEKAYNAIRNFDAPTYATAKEGVEASYNEGLTDEFVVPFIVENQNDGVNDGDTVIFYNFRPDRAAQLSEIFANRAFEGFKVEQVKDLFYATFTKYNDNIDAAIVFEKVDLNNTIGEIAQNNNLTQLRIAETEKYPHVTYFMSGGRNEEFKGERRRLIDSPKVATYDLKPEMSAYEVKDALLEELNKGDLDLIILNFANPDMVGHSGMLEPTIKAIEAVDECLGEVVDKILDMDGYAIITADHGNSDQVLTDDDQPMTTHTTNPVPVIVTKEGVTLRETGRLGDLAPTLLDLLNVEQPEDMTGESLIKH</sequence>
<evidence type="ECO:0000255" key="1">
    <source>
        <dbReference type="HAMAP-Rule" id="MF_01038"/>
    </source>
</evidence>
<dbReference type="EC" id="5.4.2.12" evidence="1"/>
<dbReference type="EMBL" id="BA000017">
    <property type="protein sequence ID" value="BAB56937.1"/>
    <property type="molecule type" value="Genomic_DNA"/>
</dbReference>
<dbReference type="RefSeq" id="WP_001085507.1">
    <property type="nucleotide sequence ID" value="NC_002758.2"/>
</dbReference>
<dbReference type="SMR" id="P64269"/>
<dbReference type="KEGG" id="sav:SAV0775"/>
<dbReference type="HOGENOM" id="CLU_026099_2_0_9"/>
<dbReference type="PhylomeDB" id="P64269"/>
<dbReference type="UniPathway" id="UPA00109">
    <property type="reaction ID" value="UER00186"/>
</dbReference>
<dbReference type="Proteomes" id="UP000002481">
    <property type="component" value="Chromosome"/>
</dbReference>
<dbReference type="GO" id="GO:0005829">
    <property type="term" value="C:cytosol"/>
    <property type="evidence" value="ECO:0007669"/>
    <property type="project" value="TreeGrafter"/>
</dbReference>
<dbReference type="GO" id="GO:0030145">
    <property type="term" value="F:manganese ion binding"/>
    <property type="evidence" value="ECO:0007669"/>
    <property type="project" value="UniProtKB-UniRule"/>
</dbReference>
<dbReference type="GO" id="GO:0004619">
    <property type="term" value="F:phosphoglycerate mutase activity"/>
    <property type="evidence" value="ECO:0007669"/>
    <property type="project" value="UniProtKB-EC"/>
</dbReference>
<dbReference type="GO" id="GO:0006007">
    <property type="term" value="P:glucose catabolic process"/>
    <property type="evidence" value="ECO:0007669"/>
    <property type="project" value="InterPro"/>
</dbReference>
<dbReference type="GO" id="GO:0006096">
    <property type="term" value="P:glycolytic process"/>
    <property type="evidence" value="ECO:0007669"/>
    <property type="project" value="UniProtKB-UniRule"/>
</dbReference>
<dbReference type="CDD" id="cd16010">
    <property type="entry name" value="iPGM"/>
    <property type="match status" value="1"/>
</dbReference>
<dbReference type="FunFam" id="3.40.1450.10:FF:000001">
    <property type="entry name" value="2,3-bisphosphoglycerate-independent phosphoglycerate mutase"/>
    <property type="match status" value="1"/>
</dbReference>
<dbReference type="FunFam" id="3.40.720.10:FF:000001">
    <property type="entry name" value="2,3-bisphosphoglycerate-independent phosphoglycerate mutase"/>
    <property type="match status" value="1"/>
</dbReference>
<dbReference type="Gene3D" id="3.40.720.10">
    <property type="entry name" value="Alkaline Phosphatase, subunit A"/>
    <property type="match status" value="1"/>
</dbReference>
<dbReference type="Gene3D" id="3.40.1450.10">
    <property type="entry name" value="BPG-independent phosphoglycerate mutase, domain B"/>
    <property type="match status" value="1"/>
</dbReference>
<dbReference type="HAMAP" id="MF_01038">
    <property type="entry name" value="GpmI"/>
    <property type="match status" value="1"/>
</dbReference>
<dbReference type="InterPro" id="IPR017850">
    <property type="entry name" value="Alkaline_phosphatase_core_sf"/>
</dbReference>
<dbReference type="InterPro" id="IPR011258">
    <property type="entry name" value="BPG-indep_PGM_N"/>
</dbReference>
<dbReference type="InterPro" id="IPR006124">
    <property type="entry name" value="Metalloenzyme"/>
</dbReference>
<dbReference type="InterPro" id="IPR036646">
    <property type="entry name" value="PGAM_B_sf"/>
</dbReference>
<dbReference type="InterPro" id="IPR005995">
    <property type="entry name" value="Pgm_bpd_ind"/>
</dbReference>
<dbReference type="NCBIfam" id="TIGR01307">
    <property type="entry name" value="pgm_bpd_ind"/>
    <property type="match status" value="1"/>
</dbReference>
<dbReference type="PANTHER" id="PTHR31637">
    <property type="entry name" value="2,3-BISPHOSPHOGLYCERATE-INDEPENDENT PHOSPHOGLYCERATE MUTASE"/>
    <property type="match status" value="1"/>
</dbReference>
<dbReference type="PANTHER" id="PTHR31637:SF0">
    <property type="entry name" value="2,3-BISPHOSPHOGLYCERATE-INDEPENDENT PHOSPHOGLYCERATE MUTASE"/>
    <property type="match status" value="1"/>
</dbReference>
<dbReference type="Pfam" id="PF06415">
    <property type="entry name" value="iPGM_N"/>
    <property type="match status" value="1"/>
</dbReference>
<dbReference type="Pfam" id="PF01676">
    <property type="entry name" value="Metalloenzyme"/>
    <property type="match status" value="1"/>
</dbReference>
<dbReference type="PIRSF" id="PIRSF001492">
    <property type="entry name" value="IPGAM"/>
    <property type="match status" value="1"/>
</dbReference>
<dbReference type="SUPFAM" id="SSF64158">
    <property type="entry name" value="2,3-Bisphosphoglycerate-independent phosphoglycerate mutase, substrate-binding domain"/>
    <property type="match status" value="1"/>
</dbReference>
<dbReference type="SUPFAM" id="SSF53649">
    <property type="entry name" value="Alkaline phosphatase-like"/>
    <property type="match status" value="1"/>
</dbReference>
<gene>
    <name evidence="1" type="primary">gpmI</name>
    <name type="synonym">pgm</name>
    <name type="ordered locus">SAV0775</name>
</gene>
<proteinExistence type="inferred from homology"/>
<reference key="1">
    <citation type="journal article" date="2001" name="Lancet">
        <title>Whole genome sequencing of meticillin-resistant Staphylococcus aureus.</title>
        <authorList>
            <person name="Kuroda M."/>
            <person name="Ohta T."/>
            <person name="Uchiyama I."/>
            <person name="Baba T."/>
            <person name="Yuzawa H."/>
            <person name="Kobayashi I."/>
            <person name="Cui L."/>
            <person name="Oguchi A."/>
            <person name="Aoki K."/>
            <person name="Nagai Y."/>
            <person name="Lian J.-Q."/>
            <person name="Ito T."/>
            <person name="Kanamori M."/>
            <person name="Matsumaru H."/>
            <person name="Maruyama A."/>
            <person name="Murakami H."/>
            <person name="Hosoyama A."/>
            <person name="Mizutani-Ui Y."/>
            <person name="Takahashi N.K."/>
            <person name="Sawano T."/>
            <person name="Inoue R."/>
            <person name="Kaito C."/>
            <person name="Sekimizu K."/>
            <person name="Hirakawa H."/>
            <person name="Kuhara S."/>
            <person name="Goto S."/>
            <person name="Yabuzaki J."/>
            <person name="Kanehisa M."/>
            <person name="Yamashita A."/>
            <person name="Oshima K."/>
            <person name="Furuya K."/>
            <person name="Yoshino C."/>
            <person name="Shiba T."/>
            <person name="Hattori M."/>
            <person name="Ogasawara N."/>
            <person name="Hayashi H."/>
            <person name="Hiramatsu K."/>
        </authorList>
    </citation>
    <scope>NUCLEOTIDE SEQUENCE [LARGE SCALE GENOMIC DNA]</scope>
    <source>
        <strain>Mu50 / ATCC 700699</strain>
    </source>
</reference>
<name>GPMI_STAAM</name>
<protein>
    <recommendedName>
        <fullName evidence="1">2,3-bisphosphoglycerate-independent phosphoglycerate mutase</fullName>
        <shortName evidence="1">BPG-independent PGAM</shortName>
        <shortName evidence="1">Phosphoglyceromutase</shortName>
        <shortName evidence="1">iPGM</shortName>
        <ecNumber evidence="1">5.4.2.12</ecNumber>
    </recommendedName>
</protein>
<accession>P64269</accession>
<accession>Q99VK6</accession>
<organism>
    <name type="scientific">Staphylococcus aureus (strain Mu50 / ATCC 700699)</name>
    <dbReference type="NCBI Taxonomy" id="158878"/>
    <lineage>
        <taxon>Bacteria</taxon>
        <taxon>Bacillati</taxon>
        <taxon>Bacillota</taxon>
        <taxon>Bacilli</taxon>
        <taxon>Bacillales</taxon>
        <taxon>Staphylococcaceae</taxon>
        <taxon>Staphylococcus</taxon>
    </lineage>
</organism>
<feature type="chain" id="PRO_0000212210" description="2,3-bisphosphoglycerate-independent phosphoglycerate mutase">
    <location>
        <begin position="1"/>
        <end position="505"/>
    </location>
</feature>
<feature type="active site" description="Phosphoserine intermediate" evidence="1">
    <location>
        <position position="62"/>
    </location>
</feature>
<feature type="binding site" evidence="1">
    <location>
        <position position="12"/>
    </location>
    <ligand>
        <name>Mn(2+)</name>
        <dbReference type="ChEBI" id="CHEBI:29035"/>
        <label>2</label>
    </ligand>
</feature>
<feature type="binding site" evidence="1">
    <location>
        <position position="62"/>
    </location>
    <ligand>
        <name>Mn(2+)</name>
        <dbReference type="ChEBI" id="CHEBI:29035"/>
        <label>2</label>
    </ligand>
</feature>
<feature type="binding site" evidence="1">
    <location>
        <position position="123"/>
    </location>
    <ligand>
        <name>substrate</name>
    </ligand>
</feature>
<feature type="binding site" evidence="1">
    <location>
        <begin position="153"/>
        <end position="154"/>
    </location>
    <ligand>
        <name>substrate</name>
    </ligand>
</feature>
<feature type="binding site" evidence="1">
    <location>
        <position position="185"/>
    </location>
    <ligand>
        <name>substrate</name>
    </ligand>
</feature>
<feature type="binding site" evidence="1">
    <location>
        <position position="191"/>
    </location>
    <ligand>
        <name>substrate</name>
    </ligand>
</feature>
<feature type="binding site" evidence="1">
    <location>
        <begin position="257"/>
        <end position="260"/>
    </location>
    <ligand>
        <name>substrate</name>
    </ligand>
</feature>
<feature type="binding site" evidence="1">
    <location>
        <position position="330"/>
    </location>
    <ligand>
        <name>substrate</name>
    </ligand>
</feature>
<feature type="binding site" evidence="1">
    <location>
        <position position="397"/>
    </location>
    <ligand>
        <name>Mn(2+)</name>
        <dbReference type="ChEBI" id="CHEBI:29035"/>
        <label>1</label>
    </ligand>
</feature>
<feature type="binding site" evidence="1">
    <location>
        <position position="401"/>
    </location>
    <ligand>
        <name>Mn(2+)</name>
        <dbReference type="ChEBI" id="CHEBI:29035"/>
        <label>1</label>
    </ligand>
</feature>
<feature type="binding site" evidence="1">
    <location>
        <position position="438"/>
    </location>
    <ligand>
        <name>Mn(2+)</name>
        <dbReference type="ChEBI" id="CHEBI:29035"/>
        <label>2</label>
    </ligand>
</feature>
<feature type="binding site" evidence="1">
    <location>
        <position position="439"/>
    </location>
    <ligand>
        <name>Mn(2+)</name>
        <dbReference type="ChEBI" id="CHEBI:29035"/>
        <label>2</label>
    </ligand>
</feature>
<feature type="binding site" evidence="1">
    <location>
        <position position="456"/>
    </location>
    <ligand>
        <name>Mn(2+)</name>
        <dbReference type="ChEBI" id="CHEBI:29035"/>
        <label>1</label>
    </ligand>
</feature>